<comment type="subunit">
    <text evidence="1">Part of the 50S ribosomal subunit.</text>
</comment>
<comment type="similarity">
    <text evidence="1">Belongs to the universal ribosomal protein uL30 family.</text>
</comment>
<name>RL30_SACEN</name>
<organism>
    <name type="scientific">Saccharopolyspora erythraea (strain ATCC 11635 / DSM 40517 / JCM 4748 / NBRC 13426 / NCIMB 8594 / NRRL 2338)</name>
    <dbReference type="NCBI Taxonomy" id="405948"/>
    <lineage>
        <taxon>Bacteria</taxon>
        <taxon>Bacillati</taxon>
        <taxon>Actinomycetota</taxon>
        <taxon>Actinomycetes</taxon>
        <taxon>Pseudonocardiales</taxon>
        <taxon>Pseudonocardiaceae</taxon>
        <taxon>Saccharopolyspora</taxon>
    </lineage>
</organism>
<feature type="chain" id="PRO_1000056103" description="Large ribosomal subunit protein uL30">
    <location>
        <begin position="1"/>
        <end position="60"/>
    </location>
</feature>
<keyword id="KW-1185">Reference proteome</keyword>
<keyword id="KW-0687">Ribonucleoprotein</keyword>
<keyword id="KW-0689">Ribosomal protein</keyword>
<sequence>MGQLKITQHKGLVGAKQNQKDSMRTLGLRKIRQSVVRPDTPDVRGLVNVVHHLVTVEEVD</sequence>
<gene>
    <name evidence="1" type="primary">rpmD</name>
    <name type="ordered locus">SACE_6818</name>
</gene>
<proteinExistence type="inferred from homology"/>
<accession>A4FPK7</accession>
<protein>
    <recommendedName>
        <fullName evidence="1">Large ribosomal subunit protein uL30</fullName>
    </recommendedName>
    <alternativeName>
        <fullName evidence="2">50S ribosomal protein L30</fullName>
    </alternativeName>
</protein>
<dbReference type="EMBL" id="AM420293">
    <property type="protein sequence ID" value="CAM05982.1"/>
    <property type="molecule type" value="Genomic_DNA"/>
</dbReference>
<dbReference type="RefSeq" id="WP_009948651.1">
    <property type="nucleotide sequence ID" value="NC_009142.1"/>
</dbReference>
<dbReference type="SMR" id="A4FPK7"/>
<dbReference type="STRING" id="405948.SACE_6818"/>
<dbReference type="KEGG" id="sen:SACE_6818"/>
<dbReference type="eggNOG" id="COG1841">
    <property type="taxonomic scope" value="Bacteria"/>
</dbReference>
<dbReference type="HOGENOM" id="CLU_131047_2_0_11"/>
<dbReference type="OrthoDB" id="9812790at2"/>
<dbReference type="Proteomes" id="UP000006728">
    <property type="component" value="Chromosome"/>
</dbReference>
<dbReference type="GO" id="GO:0022625">
    <property type="term" value="C:cytosolic large ribosomal subunit"/>
    <property type="evidence" value="ECO:0007669"/>
    <property type="project" value="TreeGrafter"/>
</dbReference>
<dbReference type="GO" id="GO:0003735">
    <property type="term" value="F:structural constituent of ribosome"/>
    <property type="evidence" value="ECO:0007669"/>
    <property type="project" value="InterPro"/>
</dbReference>
<dbReference type="GO" id="GO:0006412">
    <property type="term" value="P:translation"/>
    <property type="evidence" value="ECO:0007669"/>
    <property type="project" value="UniProtKB-UniRule"/>
</dbReference>
<dbReference type="CDD" id="cd01658">
    <property type="entry name" value="Ribosomal_L30"/>
    <property type="match status" value="1"/>
</dbReference>
<dbReference type="Gene3D" id="3.30.1390.20">
    <property type="entry name" value="Ribosomal protein L30, ferredoxin-like fold domain"/>
    <property type="match status" value="1"/>
</dbReference>
<dbReference type="HAMAP" id="MF_01371_B">
    <property type="entry name" value="Ribosomal_uL30_B"/>
    <property type="match status" value="1"/>
</dbReference>
<dbReference type="InterPro" id="IPR036919">
    <property type="entry name" value="Ribo_uL30_ferredoxin-like_sf"/>
</dbReference>
<dbReference type="InterPro" id="IPR005996">
    <property type="entry name" value="Ribosomal_uL30_bac-type"/>
</dbReference>
<dbReference type="InterPro" id="IPR018038">
    <property type="entry name" value="Ribosomal_uL30_CS"/>
</dbReference>
<dbReference type="InterPro" id="IPR016082">
    <property type="entry name" value="Ribosomal_uL30_ferredoxin-like"/>
</dbReference>
<dbReference type="NCBIfam" id="TIGR01308">
    <property type="entry name" value="rpmD_bact"/>
    <property type="match status" value="1"/>
</dbReference>
<dbReference type="PANTHER" id="PTHR15892:SF2">
    <property type="entry name" value="LARGE RIBOSOMAL SUBUNIT PROTEIN UL30M"/>
    <property type="match status" value="1"/>
</dbReference>
<dbReference type="PANTHER" id="PTHR15892">
    <property type="entry name" value="MITOCHONDRIAL RIBOSOMAL PROTEIN L30"/>
    <property type="match status" value="1"/>
</dbReference>
<dbReference type="Pfam" id="PF00327">
    <property type="entry name" value="Ribosomal_L30"/>
    <property type="match status" value="1"/>
</dbReference>
<dbReference type="PIRSF" id="PIRSF002211">
    <property type="entry name" value="Ribosomal_L30_bac-type"/>
    <property type="match status" value="1"/>
</dbReference>
<dbReference type="SUPFAM" id="SSF55129">
    <property type="entry name" value="Ribosomal protein L30p/L7e"/>
    <property type="match status" value="1"/>
</dbReference>
<dbReference type="PROSITE" id="PS00634">
    <property type="entry name" value="RIBOSOMAL_L30"/>
    <property type="match status" value="1"/>
</dbReference>
<evidence type="ECO:0000255" key="1">
    <source>
        <dbReference type="HAMAP-Rule" id="MF_01371"/>
    </source>
</evidence>
<evidence type="ECO:0000305" key="2"/>
<reference key="1">
    <citation type="journal article" date="2007" name="Nat. Biotechnol.">
        <title>Complete genome sequence of the erythromycin-producing bacterium Saccharopolyspora erythraea NRRL23338.</title>
        <authorList>
            <person name="Oliynyk M."/>
            <person name="Samborskyy M."/>
            <person name="Lester J.B."/>
            <person name="Mironenko T."/>
            <person name="Scott N."/>
            <person name="Dickens S."/>
            <person name="Haydock S.F."/>
            <person name="Leadlay P.F."/>
        </authorList>
    </citation>
    <scope>NUCLEOTIDE SEQUENCE [LARGE SCALE GENOMIC DNA]</scope>
    <source>
        <strain>ATCC 11635 / DSM 40517 / JCM 4748 / NBRC 13426 / NCIMB 8594 / NRRL 2338</strain>
    </source>
</reference>